<evidence type="ECO:0000255" key="1">
    <source>
        <dbReference type="HAMAP-Rule" id="MF_01989"/>
    </source>
</evidence>
<evidence type="ECO:0000269" key="2">
    <source>
    </source>
</evidence>
<reference key="1">
    <citation type="journal article" date="2012" name="Appl. Environ. Microbiol.">
        <title>Plasmid localization and organization of melamine degradation genes in Rhodococcus sp. strain Mel.</title>
        <authorList>
            <person name="Dodge A.G."/>
            <person name="Wackett L.P."/>
            <person name="Sadowsky M.J."/>
        </authorList>
    </citation>
    <scope>NUCLEOTIDE SEQUENCE [GENOMIC DNA]</scope>
    <scope>FUNCTION</scope>
    <source>
        <strain>Mel</strain>
    </source>
</reference>
<geneLocation type="plasmid">
    <name>pMel2</name>
</geneLocation>
<name>CYAH_RHOSO</name>
<feature type="chain" id="PRO_0000439921" description="Cyclic amide hydrolase">
    <location>
        <begin position="1"/>
        <end position="349"/>
    </location>
</feature>
<feature type="region of interest" description="RU A" evidence="1">
    <location>
        <begin position="1"/>
        <end position="90"/>
    </location>
</feature>
<feature type="region of interest" description="RU B" evidence="1">
    <location>
        <begin position="99"/>
        <end position="231"/>
    </location>
</feature>
<feature type="region of interest" description="RU C" evidence="1">
    <location>
        <begin position="237"/>
        <end position="349"/>
    </location>
</feature>
<feature type="active site" evidence="1">
    <location>
        <position position="149"/>
    </location>
</feature>
<feature type="active site" description="Nucleophile" evidence="1">
    <location>
        <position position="214"/>
    </location>
</feature>
<feature type="binding site" evidence="1">
    <location>
        <position position="38"/>
    </location>
    <ligand>
        <name>substrate</name>
    </ligand>
</feature>
<feature type="binding site" evidence="1">
    <location>
        <position position="176"/>
    </location>
    <ligand>
        <name>substrate</name>
    </ligand>
</feature>
<feature type="binding site" evidence="1">
    <location>
        <begin position="214"/>
        <end position="215"/>
    </location>
    <ligand>
        <name>substrate</name>
    </ligand>
</feature>
<feature type="binding site" evidence="1">
    <location>
        <position position="311"/>
    </location>
    <ligand>
        <name>substrate</name>
    </ligand>
</feature>
<feature type="binding site" evidence="1">
    <location>
        <begin position="330"/>
        <end position="331"/>
    </location>
    <ligand>
        <name>substrate</name>
    </ligand>
</feature>
<feature type="site" description="Important for substrate specificity" evidence="1">
    <location>
        <position position="306"/>
    </location>
</feature>
<organism>
    <name type="scientific">Rhodococcus sp</name>
    <dbReference type="NCBI Taxonomy" id="1831"/>
    <lineage>
        <taxon>Bacteria</taxon>
        <taxon>Bacillati</taxon>
        <taxon>Actinomycetota</taxon>
        <taxon>Actinomycetes</taxon>
        <taxon>Mycobacteriales</taxon>
        <taxon>Nocardiaceae</taxon>
        <taxon>Rhodococcus</taxon>
    </lineage>
</organism>
<keyword id="KW-0378">Hydrolase</keyword>
<keyword id="KW-0614">Plasmid</keyword>
<sequence length="349" mass="35242">MTSPEDTAGVEAALAAEGFSPTDVRAVMCMTESDGFGRGYASLAFAHAFAPALGCPPEDVAQQIPMIMIGGCSGLVTPYAAVFVDDPASSWVTDGSGGGLSIGVTTTATLNPLDVGTPAMVDAVADAVRSAMAAAGIDKVADVHNVQIKTPWPSSAALLDGPLSGLDAGSVGAMARAAGALGVAVALGEVSRADITADVFLRDPNLRSDVASVSAGTERVDAAVLVMGNSPTSASPYRIGHGVLRDGIDPHGVLDALRAVGIDSGWPFTADTTPVEHVFLKSAVDGTDECRGRRHVLRTDYLGPYSWLLGKAVVHATVASIVGDPMMQVSGGGEHQGPPGGGTVAVIAR</sequence>
<protein>
    <recommendedName>
        <fullName evidence="1">Cyclic amide hydrolase</fullName>
        <shortName evidence="1">CyAH</shortName>
        <ecNumber evidence="1">3.5.2.-</ecNumber>
    </recommendedName>
    <alternativeName>
        <fullName evidence="1">Ring-opening amidohydrolase</fullName>
    </alternativeName>
</protein>
<proteinExistence type="inferred from homology"/>
<dbReference type="EC" id="3.5.2.-" evidence="1"/>
<dbReference type="EMBL" id="JN241636">
    <property type="protein sequence ID" value="AEX65050.1"/>
    <property type="molecule type" value="Genomic_DNA"/>
</dbReference>
<dbReference type="SMR" id="H8ZKS8"/>
<dbReference type="GO" id="GO:0016812">
    <property type="term" value="F:hydrolase activity, acting on carbon-nitrogen (but not peptide) bonds, in cyclic amides"/>
    <property type="evidence" value="ECO:0007669"/>
    <property type="project" value="UniProtKB-UniRule"/>
</dbReference>
<dbReference type="Gene3D" id="3.30.1330.160">
    <property type="entry name" value="Cyanuric acid hydrolase/Barbituras, RU C"/>
    <property type="match status" value="1"/>
</dbReference>
<dbReference type="Gene3D" id="3.30.1330.170">
    <property type="entry name" value="Cyanuric acid hydrolase/Barbiturase, RU A"/>
    <property type="match status" value="1"/>
</dbReference>
<dbReference type="Gene3D" id="3.30.1330.180">
    <property type="entry name" value="Cyanuric acid hydrolase/Barbiturase, RU B"/>
    <property type="match status" value="1"/>
</dbReference>
<dbReference type="HAMAP" id="MF_01989">
    <property type="entry name" value="Cyc_amidohydrol"/>
    <property type="match status" value="1"/>
</dbReference>
<dbReference type="InterPro" id="IPR014086">
    <property type="entry name" value="AtzD/Barbiturase"/>
</dbReference>
<dbReference type="InterPro" id="IPR043008">
    <property type="entry name" value="AtzD/Barbiturase_RUA"/>
</dbReference>
<dbReference type="InterPro" id="IPR043006">
    <property type="entry name" value="AtzD/Barbiturase_RUB"/>
</dbReference>
<dbReference type="InterPro" id="IPR043007">
    <property type="entry name" value="AtzD/Barbiturase_RUC"/>
</dbReference>
<dbReference type="NCBIfam" id="TIGR02714">
    <property type="entry name" value="amido_AtzD_TrzD"/>
    <property type="match status" value="1"/>
</dbReference>
<dbReference type="Pfam" id="PF09663">
    <property type="entry name" value="Amido_AtzD_TrzD"/>
    <property type="match status" value="1"/>
</dbReference>
<comment type="function">
    <text evidence="1 2">Cyclic amide hydrolase of unknown substrate specificity. Catalyzes the hydrolytic ring-opening of a cyclic amide. Does not act on cyanuric acid nor barbituric acid.</text>
</comment>
<comment type="subunit">
    <text evidence="1">Homotetramer.</text>
</comment>
<comment type="domain">
    <text evidence="1">The monomer structure is formed from three repeating units (RUs) that share the same structure as one another. The monomer and the active site possess nearly threefold rotational symmetry, to the extent that the active site possesses three potential Ser-Lys catalytic dyads, but one of the 3 active site surfaces varies in composition suggesting it is involved in conferring substrate specificity.</text>
</comment>
<comment type="similarity">
    <text evidence="1">Belongs to the cyclic amide hydrolase (CyAH) family.</text>
</comment>
<accession>H8ZKS8</accession>